<organism>
    <name type="scientific">Homo sapiens</name>
    <name type="common">Human</name>
    <dbReference type="NCBI Taxonomy" id="9606"/>
    <lineage>
        <taxon>Eukaryota</taxon>
        <taxon>Metazoa</taxon>
        <taxon>Chordata</taxon>
        <taxon>Craniata</taxon>
        <taxon>Vertebrata</taxon>
        <taxon>Euteleostomi</taxon>
        <taxon>Mammalia</taxon>
        <taxon>Eutheria</taxon>
        <taxon>Euarchontoglires</taxon>
        <taxon>Primates</taxon>
        <taxon>Haplorrhini</taxon>
        <taxon>Catarrhini</taxon>
        <taxon>Hominidae</taxon>
        <taxon>Homo</taxon>
    </lineage>
</organism>
<reference key="1">
    <citation type="journal article" date="2004" name="Nat. Genet.">
        <title>Complete sequencing and characterization of 21,243 full-length human cDNAs.</title>
        <authorList>
            <person name="Ota T."/>
            <person name="Suzuki Y."/>
            <person name="Nishikawa T."/>
            <person name="Otsuki T."/>
            <person name="Sugiyama T."/>
            <person name="Irie R."/>
            <person name="Wakamatsu A."/>
            <person name="Hayashi K."/>
            <person name="Sato H."/>
            <person name="Nagai K."/>
            <person name="Kimura K."/>
            <person name="Makita H."/>
            <person name="Sekine M."/>
            <person name="Obayashi M."/>
            <person name="Nishi T."/>
            <person name="Shibahara T."/>
            <person name="Tanaka T."/>
            <person name="Ishii S."/>
            <person name="Yamamoto J."/>
            <person name="Saito K."/>
            <person name="Kawai Y."/>
            <person name="Isono Y."/>
            <person name="Nakamura Y."/>
            <person name="Nagahari K."/>
            <person name="Murakami K."/>
            <person name="Yasuda T."/>
            <person name="Iwayanagi T."/>
            <person name="Wagatsuma M."/>
            <person name="Shiratori A."/>
            <person name="Sudo H."/>
            <person name="Hosoiri T."/>
            <person name="Kaku Y."/>
            <person name="Kodaira H."/>
            <person name="Kondo H."/>
            <person name="Sugawara M."/>
            <person name="Takahashi M."/>
            <person name="Kanda K."/>
            <person name="Yokoi T."/>
            <person name="Furuya T."/>
            <person name="Kikkawa E."/>
            <person name="Omura Y."/>
            <person name="Abe K."/>
            <person name="Kamihara K."/>
            <person name="Katsuta N."/>
            <person name="Sato K."/>
            <person name="Tanikawa M."/>
            <person name="Yamazaki M."/>
            <person name="Ninomiya K."/>
            <person name="Ishibashi T."/>
            <person name="Yamashita H."/>
            <person name="Murakawa K."/>
            <person name="Fujimori K."/>
            <person name="Tanai H."/>
            <person name="Kimata M."/>
            <person name="Watanabe M."/>
            <person name="Hiraoka S."/>
            <person name="Chiba Y."/>
            <person name="Ishida S."/>
            <person name="Ono Y."/>
            <person name="Takiguchi S."/>
            <person name="Watanabe S."/>
            <person name="Yosida M."/>
            <person name="Hotuta T."/>
            <person name="Kusano J."/>
            <person name="Kanehori K."/>
            <person name="Takahashi-Fujii A."/>
            <person name="Hara H."/>
            <person name="Tanase T.-O."/>
            <person name="Nomura Y."/>
            <person name="Togiya S."/>
            <person name="Komai F."/>
            <person name="Hara R."/>
            <person name="Takeuchi K."/>
            <person name="Arita M."/>
            <person name="Imose N."/>
            <person name="Musashino K."/>
            <person name="Yuuki H."/>
            <person name="Oshima A."/>
            <person name="Sasaki N."/>
            <person name="Aotsuka S."/>
            <person name="Yoshikawa Y."/>
            <person name="Matsunawa H."/>
            <person name="Ichihara T."/>
            <person name="Shiohata N."/>
            <person name="Sano S."/>
            <person name="Moriya S."/>
            <person name="Momiyama H."/>
            <person name="Satoh N."/>
            <person name="Takami S."/>
            <person name="Terashima Y."/>
            <person name="Suzuki O."/>
            <person name="Nakagawa S."/>
            <person name="Senoh A."/>
            <person name="Mizoguchi H."/>
            <person name="Goto Y."/>
            <person name="Shimizu F."/>
            <person name="Wakebe H."/>
            <person name="Hishigaki H."/>
            <person name="Watanabe T."/>
            <person name="Sugiyama A."/>
            <person name="Takemoto M."/>
            <person name="Kawakami B."/>
            <person name="Yamazaki M."/>
            <person name="Watanabe K."/>
            <person name="Kumagai A."/>
            <person name="Itakura S."/>
            <person name="Fukuzumi Y."/>
            <person name="Fujimori Y."/>
            <person name="Komiyama M."/>
            <person name="Tashiro H."/>
            <person name="Tanigami A."/>
            <person name="Fujiwara T."/>
            <person name="Ono T."/>
            <person name="Yamada K."/>
            <person name="Fujii Y."/>
            <person name="Ozaki K."/>
            <person name="Hirao M."/>
            <person name="Ohmori Y."/>
            <person name="Kawabata A."/>
            <person name="Hikiji T."/>
            <person name="Kobatake N."/>
            <person name="Inagaki H."/>
            <person name="Ikema Y."/>
            <person name="Okamoto S."/>
            <person name="Okitani R."/>
            <person name="Kawakami T."/>
            <person name="Noguchi S."/>
            <person name="Itoh T."/>
            <person name="Shigeta K."/>
            <person name="Senba T."/>
            <person name="Matsumura K."/>
            <person name="Nakajima Y."/>
            <person name="Mizuno T."/>
            <person name="Morinaga M."/>
            <person name="Sasaki M."/>
            <person name="Togashi T."/>
            <person name="Oyama M."/>
            <person name="Hata H."/>
            <person name="Watanabe M."/>
            <person name="Komatsu T."/>
            <person name="Mizushima-Sugano J."/>
            <person name="Satoh T."/>
            <person name="Shirai Y."/>
            <person name="Takahashi Y."/>
            <person name="Nakagawa K."/>
            <person name="Okumura K."/>
            <person name="Nagase T."/>
            <person name="Nomura N."/>
            <person name="Kikuchi H."/>
            <person name="Masuho Y."/>
            <person name="Yamashita R."/>
            <person name="Nakai K."/>
            <person name="Yada T."/>
            <person name="Nakamura Y."/>
            <person name="Ohara O."/>
            <person name="Isogai T."/>
            <person name="Sugano S."/>
        </authorList>
    </citation>
    <scope>NUCLEOTIDE SEQUENCE [LARGE SCALE MRNA]</scope>
    <source>
        <tissue>Kidney</tissue>
    </source>
</reference>
<reference key="2">
    <citation type="submission" date="2005-09" db="EMBL/GenBank/DDBJ databases">
        <authorList>
            <person name="Mural R.J."/>
            <person name="Istrail S."/>
            <person name="Sutton G.G."/>
            <person name="Florea L."/>
            <person name="Halpern A.L."/>
            <person name="Mobarry C.M."/>
            <person name="Lippert R."/>
            <person name="Walenz B."/>
            <person name="Shatkay H."/>
            <person name="Dew I."/>
            <person name="Miller J.R."/>
            <person name="Flanigan M.J."/>
            <person name="Edwards N.J."/>
            <person name="Bolanos R."/>
            <person name="Fasulo D."/>
            <person name="Halldorsson B.V."/>
            <person name="Hannenhalli S."/>
            <person name="Turner R."/>
            <person name="Yooseph S."/>
            <person name="Lu F."/>
            <person name="Nusskern D.R."/>
            <person name="Shue B.C."/>
            <person name="Zheng X.H."/>
            <person name="Zhong F."/>
            <person name="Delcher A.L."/>
            <person name="Huson D.H."/>
            <person name="Kravitz S.A."/>
            <person name="Mouchard L."/>
            <person name="Reinert K."/>
            <person name="Remington K.A."/>
            <person name="Clark A.G."/>
            <person name="Waterman M.S."/>
            <person name="Eichler E.E."/>
            <person name="Adams M.D."/>
            <person name="Hunkapiller M.W."/>
            <person name="Myers E.W."/>
            <person name="Venter J.C."/>
        </authorList>
    </citation>
    <scope>NUCLEOTIDE SEQUENCE [LARGE SCALE GENOMIC DNA]</scope>
</reference>
<reference key="3">
    <citation type="journal article" date="2004" name="Genome Res.">
        <title>The status, quality, and expansion of the NIH full-length cDNA project: the Mammalian Gene Collection (MGC).</title>
        <authorList>
            <consortium name="The MGC Project Team"/>
        </authorList>
    </citation>
    <scope>NUCLEOTIDE SEQUENCE [LARGE SCALE MRNA]</scope>
    <source>
        <tissue>Testis</tissue>
    </source>
</reference>
<protein>
    <recommendedName>
        <fullName>Zinc finger protein 41 homolog</fullName>
        <shortName>Zfp-41</shortName>
    </recommendedName>
</protein>
<gene>
    <name type="primary">ZFP41</name>
</gene>
<feature type="chain" id="PRO_0000296186" description="Zinc finger protein 41 homolog">
    <location>
        <begin position="1"/>
        <end position="198"/>
    </location>
</feature>
<feature type="zinc finger region" description="C2H2-type 1" evidence="2">
    <location>
        <begin position="87"/>
        <end position="109"/>
    </location>
</feature>
<feature type="zinc finger region" description="C2H2-type 2" evidence="2">
    <location>
        <begin position="115"/>
        <end position="137"/>
    </location>
</feature>
<feature type="zinc finger region" description="C2H2-type 3" evidence="2">
    <location>
        <begin position="143"/>
        <end position="165"/>
    </location>
</feature>
<feature type="zinc finger region" description="C2H2-type 4" evidence="2">
    <location>
        <begin position="171"/>
        <end position="193"/>
    </location>
</feature>
<feature type="region of interest" description="Disordered" evidence="3">
    <location>
        <begin position="1"/>
        <end position="55"/>
    </location>
</feature>
<feature type="compositionally biased region" description="Basic residues" evidence="3">
    <location>
        <begin position="1"/>
        <end position="12"/>
    </location>
</feature>
<feature type="compositionally biased region" description="Basic and acidic residues" evidence="3">
    <location>
        <begin position="13"/>
        <end position="38"/>
    </location>
</feature>
<comment type="function">
    <text evidence="1">A putative DNA-binding regulatory protein associated with meiosis in spermatogenesis.</text>
</comment>
<comment type="interaction">
    <interactant intactId="EBI-12224489">
        <id>Q8N8Y5</id>
    </interactant>
    <interactant intactId="EBI-10172290">
        <id>P60409</id>
        <label>KRTAP10-7</label>
    </interactant>
    <organismsDiffer>false</organismsDiffer>
    <experiments>3</experiments>
</comment>
<comment type="interaction">
    <interactant intactId="EBI-12224489">
        <id>Q8N8Y5</id>
    </interactant>
    <interactant intactId="EBI-741396">
        <id>Q9BRT6</id>
        <label>LLPH</label>
    </interactant>
    <organismsDiffer>false</organismsDiffer>
    <experiments>3</experiments>
</comment>
<comment type="interaction">
    <interactant intactId="EBI-12224489">
        <id>Q8N8Y5</id>
    </interactant>
    <interactant intactId="EBI-1048159">
        <id>P55081</id>
        <label>MFAP1</label>
    </interactant>
    <organismsDiffer>false</organismsDiffer>
    <experiments>3</experiments>
</comment>
<comment type="interaction">
    <interactant intactId="EBI-12224489">
        <id>Q8N8Y5</id>
    </interactant>
    <interactant intactId="EBI-741906">
        <id>Q9NP50</id>
        <label>SINHCAF</label>
    </interactant>
    <organismsDiffer>false</organismsDiffer>
    <experiments>3</experiments>
</comment>
<comment type="interaction">
    <interactant intactId="EBI-12224489">
        <id>Q8N8Y5</id>
    </interactant>
    <interactant intactId="EBI-607755">
        <id>Q9BZL1</id>
        <label>UBL5</label>
    </interactant>
    <organismsDiffer>false</organismsDiffer>
    <experiments>3</experiments>
</comment>
<comment type="interaction">
    <interactant intactId="EBI-12224489">
        <id>Q8N8Y5</id>
    </interactant>
    <interactant intactId="EBI-1052613">
        <id>Q96JP5</id>
        <label>ZFP91</label>
    </interactant>
    <organismsDiffer>false</organismsDiffer>
    <experiments>3</experiments>
</comment>
<comment type="interaction">
    <interactant intactId="EBI-12224489">
        <id>Q8N8Y5</id>
    </interactant>
    <interactant intactId="EBI-12901093">
        <id>Q8NCK3</id>
        <label>ZNF485</label>
    </interactant>
    <organismsDiffer>false</organismsDiffer>
    <experiments>3</experiments>
</comment>
<comment type="interaction">
    <interactant intactId="EBI-12224489">
        <id>Q8N8Y5</id>
    </interactant>
    <interactant intactId="EBI-23858379">
        <id>Q9BQ02</id>
    </interactant>
    <organismsDiffer>false</organismsDiffer>
    <experiments>3</experiments>
</comment>
<comment type="subcellular location">
    <subcellularLocation>
        <location evidence="1">Nucleus</location>
    </subcellularLocation>
</comment>
<comment type="similarity">
    <text evidence="4">Belongs to the krueppel C2H2-type zinc-finger protein family.</text>
</comment>
<dbReference type="EMBL" id="AK096024">
    <property type="protein sequence ID" value="BAC04676.1"/>
    <property type="molecule type" value="mRNA"/>
</dbReference>
<dbReference type="EMBL" id="CH471162">
    <property type="protein sequence ID" value="EAW82273.1"/>
    <property type="molecule type" value="Genomic_DNA"/>
</dbReference>
<dbReference type="EMBL" id="CH471162">
    <property type="protein sequence ID" value="EAW82274.1"/>
    <property type="molecule type" value="Genomic_DNA"/>
</dbReference>
<dbReference type="EMBL" id="CH471162">
    <property type="protein sequence ID" value="EAW82275.1"/>
    <property type="molecule type" value="Genomic_DNA"/>
</dbReference>
<dbReference type="EMBL" id="BC034608">
    <property type="protein sequence ID" value="AAH34608.1"/>
    <property type="molecule type" value="mRNA"/>
</dbReference>
<dbReference type="CCDS" id="CCDS6397.3"/>
<dbReference type="RefSeq" id="NP_001258085.3">
    <property type="nucleotide sequence ID" value="NM_001271156.3"/>
</dbReference>
<dbReference type="RefSeq" id="NP_776193.3">
    <property type="nucleotide sequence ID" value="NM_173832.6"/>
</dbReference>
<dbReference type="SMR" id="Q8N8Y5"/>
<dbReference type="BioGRID" id="130307">
    <property type="interactions" value="59"/>
</dbReference>
<dbReference type="FunCoup" id="Q8N8Y5">
    <property type="interactions" value="63"/>
</dbReference>
<dbReference type="IntAct" id="Q8N8Y5">
    <property type="interactions" value="44"/>
</dbReference>
<dbReference type="STRING" id="9606.ENSP00000428966"/>
<dbReference type="iPTMnet" id="Q8N8Y5"/>
<dbReference type="PhosphoSitePlus" id="Q8N8Y5"/>
<dbReference type="BioMuta" id="ZFP41"/>
<dbReference type="DMDM" id="74760014"/>
<dbReference type="jPOST" id="Q8N8Y5"/>
<dbReference type="MassIVE" id="Q8N8Y5"/>
<dbReference type="PaxDb" id="9606-ENSP00000327427"/>
<dbReference type="PeptideAtlas" id="Q8N8Y5"/>
<dbReference type="ProteomicsDB" id="72475"/>
<dbReference type="Pumba" id="Q8N8Y5"/>
<dbReference type="Antibodypedia" id="27860">
    <property type="antibodies" value="11 antibodies from 7 providers"/>
</dbReference>
<dbReference type="DNASU" id="286128"/>
<dbReference type="Ensembl" id="ENST00000330701.7">
    <property type="protein sequence ID" value="ENSP00000327427.6"/>
    <property type="gene ID" value="ENSG00000181638.20"/>
</dbReference>
<dbReference type="Ensembl" id="ENST00000520584.6">
    <property type="protein sequence ID" value="ENSP00000430465.3"/>
    <property type="gene ID" value="ENSG00000181638.20"/>
</dbReference>
<dbReference type="GeneID" id="286128"/>
<dbReference type="KEGG" id="hsa:286128"/>
<dbReference type="MANE-Select" id="ENST00000330701.7">
    <property type="protein sequence ID" value="ENSP00000327427.6"/>
    <property type="RefSeq nucleotide sequence ID" value="NM_173832.6"/>
    <property type="RefSeq protein sequence ID" value="NP_776193.3"/>
</dbReference>
<dbReference type="UCSC" id="uc003yxw.5">
    <property type="organism name" value="human"/>
</dbReference>
<dbReference type="AGR" id="HGNC:26786"/>
<dbReference type="CTD" id="286128"/>
<dbReference type="DisGeNET" id="286128"/>
<dbReference type="GeneCards" id="ZFP41"/>
<dbReference type="HGNC" id="HGNC:26786">
    <property type="gene designation" value="ZFP41"/>
</dbReference>
<dbReference type="HPA" id="ENSG00000181638">
    <property type="expression patterns" value="Low tissue specificity"/>
</dbReference>
<dbReference type="neXtProt" id="NX_Q8N8Y5"/>
<dbReference type="OpenTargets" id="ENSG00000181638"/>
<dbReference type="PharmGKB" id="PA142670529"/>
<dbReference type="VEuPathDB" id="HostDB:ENSG00000181638"/>
<dbReference type="eggNOG" id="KOG1721">
    <property type="taxonomic scope" value="Eukaryota"/>
</dbReference>
<dbReference type="GeneTree" id="ENSGT01130000278290"/>
<dbReference type="HOGENOM" id="CLU_002678_2_6_1"/>
<dbReference type="InParanoid" id="Q8N8Y5"/>
<dbReference type="OMA" id="QRKKPHE"/>
<dbReference type="OrthoDB" id="427030at2759"/>
<dbReference type="PAN-GO" id="Q8N8Y5">
    <property type="GO annotations" value="3 GO annotations based on evolutionary models"/>
</dbReference>
<dbReference type="PhylomeDB" id="Q8N8Y5"/>
<dbReference type="TreeFam" id="TF337091"/>
<dbReference type="PathwayCommons" id="Q8N8Y5"/>
<dbReference type="SignaLink" id="Q8N8Y5"/>
<dbReference type="BioGRID-ORCS" id="286128">
    <property type="hits" value="16 hits in 1170 CRISPR screens"/>
</dbReference>
<dbReference type="ChiTaRS" id="ZFP41">
    <property type="organism name" value="human"/>
</dbReference>
<dbReference type="GenomeRNAi" id="286128"/>
<dbReference type="Pharos" id="Q8N8Y5">
    <property type="development level" value="Tdark"/>
</dbReference>
<dbReference type="PRO" id="PR:Q8N8Y5"/>
<dbReference type="Proteomes" id="UP000005640">
    <property type="component" value="Chromosome 8"/>
</dbReference>
<dbReference type="RNAct" id="Q8N8Y5">
    <property type="molecule type" value="protein"/>
</dbReference>
<dbReference type="Bgee" id="ENSG00000181638">
    <property type="expression patterns" value="Expressed in buccal mucosa cell and 137 other cell types or tissues"/>
</dbReference>
<dbReference type="GO" id="GO:0005634">
    <property type="term" value="C:nucleus"/>
    <property type="evidence" value="ECO:0000318"/>
    <property type="project" value="GO_Central"/>
</dbReference>
<dbReference type="GO" id="GO:0000981">
    <property type="term" value="F:DNA-binding transcription factor activity, RNA polymerase II-specific"/>
    <property type="evidence" value="ECO:0000318"/>
    <property type="project" value="GO_Central"/>
</dbReference>
<dbReference type="GO" id="GO:0000977">
    <property type="term" value="F:RNA polymerase II transcription regulatory region sequence-specific DNA binding"/>
    <property type="evidence" value="ECO:0000318"/>
    <property type="project" value="GO_Central"/>
</dbReference>
<dbReference type="GO" id="GO:1990837">
    <property type="term" value="F:sequence-specific double-stranded DNA binding"/>
    <property type="evidence" value="ECO:0000314"/>
    <property type="project" value="ARUK-UCL"/>
</dbReference>
<dbReference type="GO" id="GO:0008270">
    <property type="term" value="F:zinc ion binding"/>
    <property type="evidence" value="ECO:0007669"/>
    <property type="project" value="UniProtKB-KW"/>
</dbReference>
<dbReference type="GO" id="GO:0030154">
    <property type="term" value="P:cell differentiation"/>
    <property type="evidence" value="ECO:0007669"/>
    <property type="project" value="UniProtKB-KW"/>
</dbReference>
<dbReference type="GO" id="GO:0006357">
    <property type="term" value="P:regulation of transcription by RNA polymerase II"/>
    <property type="evidence" value="ECO:0000318"/>
    <property type="project" value="GO_Central"/>
</dbReference>
<dbReference type="GO" id="GO:0007283">
    <property type="term" value="P:spermatogenesis"/>
    <property type="evidence" value="ECO:0007669"/>
    <property type="project" value="UniProtKB-KW"/>
</dbReference>
<dbReference type="FunFam" id="3.30.160.60:FF:000688">
    <property type="entry name" value="zinc finger protein 197 isoform X1"/>
    <property type="match status" value="1"/>
</dbReference>
<dbReference type="FunFam" id="3.30.160.60:FF:000303">
    <property type="entry name" value="Zinc finger protein 41"/>
    <property type="match status" value="1"/>
</dbReference>
<dbReference type="FunFam" id="3.30.160.60:FF:001451">
    <property type="entry name" value="zinc finger protein 41 homolog"/>
    <property type="match status" value="2"/>
</dbReference>
<dbReference type="Gene3D" id="3.30.160.60">
    <property type="entry name" value="Classic Zinc Finger"/>
    <property type="match status" value="4"/>
</dbReference>
<dbReference type="InterPro" id="IPR036236">
    <property type="entry name" value="Znf_C2H2_sf"/>
</dbReference>
<dbReference type="InterPro" id="IPR013087">
    <property type="entry name" value="Znf_C2H2_type"/>
</dbReference>
<dbReference type="PANTHER" id="PTHR24393">
    <property type="entry name" value="ZINC FINGER PROTEIN"/>
    <property type="match status" value="1"/>
</dbReference>
<dbReference type="PANTHER" id="PTHR24393:SF100">
    <property type="entry name" value="ZINC FINGER PROTEIN-RELATED"/>
    <property type="match status" value="1"/>
</dbReference>
<dbReference type="Pfam" id="PF00096">
    <property type="entry name" value="zf-C2H2"/>
    <property type="match status" value="3"/>
</dbReference>
<dbReference type="Pfam" id="PF13894">
    <property type="entry name" value="zf-C2H2_4"/>
    <property type="match status" value="1"/>
</dbReference>
<dbReference type="SMART" id="SM00355">
    <property type="entry name" value="ZnF_C2H2"/>
    <property type="match status" value="4"/>
</dbReference>
<dbReference type="SUPFAM" id="SSF57667">
    <property type="entry name" value="beta-beta-alpha zinc fingers"/>
    <property type="match status" value="2"/>
</dbReference>
<dbReference type="PROSITE" id="PS00028">
    <property type="entry name" value="ZINC_FINGER_C2H2_1"/>
    <property type="match status" value="4"/>
</dbReference>
<dbReference type="PROSITE" id="PS50157">
    <property type="entry name" value="ZINC_FINGER_C2H2_2"/>
    <property type="match status" value="4"/>
</dbReference>
<sequence>MEKPAGRKKKTPTPREEADVQKSALREEKVSGDRKPPERPTVPRKPRTEPCLSPEDEEHVFDAFDASFKDDFEGVPVFIPFQRKKPYECSECGRIFKHKTDHIRHQRVHTGEKPFKCAQCGKAFRHSSDVTKHQRTHTGEKPFKCGECGKAFNCGSNLLKHQKTHTGEKPYECTHCGKAFAYSSCLIRHQKRHPRKKP</sequence>
<accession>Q8N8Y5</accession>
<accession>D3DWJ5</accession>
<name>ZFP41_HUMAN</name>
<proteinExistence type="evidence at protein level"/>
<keyword id="KW-0217">Developmental protein</keyword>
<keyword id="KW-0221">Differentiation</keyword>
<keyword id="KW-0238">DNA-binding</keyword>
<keyword id="KW-0479">Metal-binding</keyword>
<keyword id="KW-0539">Nucleus</keyword>
<keyword id="KW-1267">Proteomics identification</keyword>
<keyword id="KW-1185">Reference proteome</keyword>
<keyword id="KW-0677">Repeat</keyword>
<keyword id="KW-0744">Spermatogenesis</keyword>
<keyword id="KW-0804">Transcription</keyword>
<keyword id="KW-0805">Transcription regulation</keyword>
<keyword id="KW-0862">Zinc</keyword>
<keyword id="KW-0863">Zinc-finger</keyword>
<evidence type="ECO:0000250" key="1"/>
<evidence type="ECO:0000255" key="2">
    <source>
        <dbReference type="PROSITE-ProRule" id="PRU00042"/>
    </source>
</evidence>
<evidence type="ECO:0000256" key="3">
    <source>
        <dbReference type="SAM" id="MobiDB-lite"/>
    </source>
</evidence>
<evidence type="ECO:0000305" key="4"/>